<dbReference type="EMBL" id="M11787">
    <property type="protein sequence ID" value="AAA42828.1"/>
    <property type="molecule type" value="Genomic_RNA"/>
</dbReference>
<dbReference type="PIR" id="A25484">
    <property type="entry name" value="P2XR10"/>
</dbReference>
<dbReference type="RefSeq" id="YP_052958.1">
    <property type="nucleotide sequence ID" value="NC_006013.1"/>
</dbReference>
<dbReference type="SMR" id="P06945"/>
<dbReference type="KEGG" id="vg:2943152"/>
<dbReference type="Proteomes" id="UP000007662">
    <property type="component" value="Genome"/>
</dbReference>
<dbReference type="GO" id="GO:0039625">
    <property type="term" value="C:viral inner capsid"/>
    <property type="evidence" value="ECO:0007669"/>
    <property type="project" value="UniProtKB-KW"/>
</dbReference>
<dbReference type="GO" id="GO:0005198">
    <property type="term" value="F:structural molecule activity"/>
    <property type="evidence" value="ECO:0007669"/>
    <property type="project" value="InterPro"/>
</dbReference>
<dbReference type="GO" id="GO:0075512">
    <property type="term" value="P:clathrin-dependent endocytosis of virus by host cell"/>
    <property type="evidence" value="ECO:0007669"/>
    <property type="project" value="UniProtKB-KW"/>
</dbReference>
<dbReference type="GO" id="GO:0019062">
    <property type="term" value="P:virion attachment to host cell"/>
    <property type="evidence" value="ECO:0007669"/>
    <property type="project" value="UniProtKB-KW"/>
</dbReference>
<dbReference type="InterPro" id="IPR001742">
    <property type="entry name" value="Capsid_VP2_Orbivir"/>
</dbReference>
<dbReference type="Pfam" id="PF00898">
    <property type="entry name" value="Orbi_VP2"/>
    <property type="match status" value="1"/>
</dbReference>
<reference key="1">
    <citation type="journal article" date="1985" name="J. Virol.">
        <title>Complete sequence of bluetongue virus L2 RNA that codes for the antigen recognized by neutralizing antibodies.</title>
        <authorList>
            <person name="Purdy M.A."/>
            <person name="Ghiasi H."/>
            <person name="Rao C.D."/>
            <person name="Roy P."/>
        </authorList>
    </citation>
    <scope>NUCLEOTIDE SEQUENCE [GENOMIC RNA]</scope>
</reference>
<organism>
    <name type="scientific">Bluetongue virus 10 (isolate USA)</name>
    <name type="common">BTV 10</name>
    <dbReference type="NCBI Taxonomy" id="10900"/>
    <lineage>
        <taxon>Viruses</taxon>
        <taxon>Riboviria</taxon>
        <taxon>Orthornavirae</taxon>
        <taxon>Duplornaviricota</taxon>
        <taxon>Resentoviricetes</taxon>
        <taxon>Reovirales</taxon>
        <taxon>Sedoreoviridae</taxon>
        <taxon>Orbivirus</taxon>
        <taxon>Bluetongue virus</taxon>
    </lineage>
</organism>
<evidence type="ECO:0000250" key="1"/>
<evidence type="ECO:0000305" key="2"/>
<accession>P06945</accession>
<organismHost>
    <name type="scientific">Antilocapra americana</name>
    <name type="common">Pronghorn</name>
    <dbReference type="NCBI Taxonomy" id="9891"/>
</organismHost>
<organismHost>
    <name type="scientific">Bos taurus</name>
    <name type="common">Bovine</name>
    <dbReference type="NCBI Taxonomy" id="9913"/>
</organismHost>
<organismHost>
    <name type="scientific">Capra hircus</name>
    <name type="common">Goat</name>
    <dbReference type="NCBI Taxonomy" id="9925"/>
</organismHost>
<organismHost>
    <name type="scientific">Culicoides variipennis</name>
    <name type="common">Biting midge</name>
    <dbReference type="NCBI Taxonomy" id="46212"/>
</organismHost>
<organismHost>
    <name type="scientific">Ovis aries</name>
    <name type="common">Sheep</name>
    <dbReference type="NCBI Taxonomy" id="9940"/>
</organismHost>
<gene>
    <name type="primary">Segment-2</name>
</gene>
<keyword id="KW-0167">Capsid protein</keyword>
<keyword id="KW-1165">Clathrin-mediated endocytosis of virus by host</keyword>
<keyword id="KW-0945">Host-virus interaction</keyword>
<keyword id="KW-1153">Inner capsid protein</keyword>
<keyword id="KW-1185">Reference proteome</keyword>
<keyword id="KW-1161">Viral attachment to host cell</keyword>
<keyword id="KW-1162">Viral penetration into host cytoplasm</keyword>
<keyword id="KW-0946">Virion</keyword>
<keyword id="KW-1164">Virus endocytosis by host</keyword>
<keyword id="KW-1160">Virus entry into host cell</keyword>
<feature type="chain" id="PRO_0000222684" description="Outer capsid protein VP2">
    <location>
        <begin position="1"/>
        <end position="956"/>
    </location>
</feature>
<name>VP2_BTV10</name>
<proteinExistence type="inferred from homology"/>
<sequence>MEEFVIPVFSERDIPYSLLNHYPLAIQIDVKVDDEGGKHNLIKIPESDMIDVPRLSIIEALNYRPKRNDGVVVPRLLDITLRAYDNRKSAKNAKGVEFMTDTKWMKWAIDDKMDIQPLKVTLDNHCSVNHQLFNCIVKARSANADTIYYDYYPLENGAKRCNHTNLDLLRSLTTTEMFHILQGAAYALKTTYELVAHSERENMSESYQVGTQRWIQLRKGTKIGYRGQPYERFISSLVQVIIKGKIPDEIRTEIAELNRIKDEWKNAAYDRTEIRALELCKILSAIGRKMLDVQEEPKDEMALSTRFQFKLDEKFIRTDQEHVNIFKVGGSATDDGRFYALIAIAGTDTQQGRVWRTNPYPCLRGALIAAECELGDVYFTLRQTYKWSLRPEYGQRERPLEDNKYVFARLNLFDTNLAVGDEIIHWRYEVYQPKETTHDDGYICVSQKGDDELLCEVDEDRYKEMFDRMIQGGWDQERFKLHNILTEPNLLTIDFEKDAYLGARSELVFPPYYDKWINSPMFNARLKIARGEIATWKADDPWSNRAVHGYIKTSAESLEYALGPYYDLRLQLFGDTLSLGQRQSAVFEHMAQQDDFSTLTDYTKGRTVCPHSGGTFYTFRKVALIILSNYERLDPSLHEGREHETYMHPAVNDVFRRHVLEMKDFSQLICFVFDYIFEKHVQLRNAKEARRIIYLIQNTSGAYRLDVLREAFPNFLKHVMNLRDVKRICDLNVINFFPLLFLVQDNISYWHRQWSIPMILFDQVIRLIPVEVGAYANRFGLKSFFNFIRFHPGDSKKRQDADDTHKEFGSICFEYYTTTKISQGEIDVPVVTSKLDTLKLHVASLCAGLADSLVYTLPVAHPKKSIVLIIVGDDKLEPQIRSEQIVNKYYYSRRHISGVVSICVNQGGQLKVHSMGITRHRICDKSILKYKCKVVLVRMPGHVFGNDELMTKLLNV</sequence>
<comment type="function">
    <text evidence="1">The VP2 protein is one of the two proteins (with VP5) which constitute the virus particle outer capsid. It is the major target of the host immunogenic response. Responsible for viral attachment to target host cell, probably by binding to sialic acid. This attachment induces virion internalization predominantly through clathrin-dependent endocytosis (By similarity).</text>
</comment>
<comment type="subcellular location">
    <subcellularLocation>
        <location evidence="2">Virion</location>
    </subcellularLocation>
</comment>
<comment type="similarity">
    <text evidence="2">Belongs to the orbivirus VP2 family.</text>
</comment>
<protein>
    <recommendedName>
        <fullName>Outer capsid protein VP2</fullName>
    </recommendedName>
</protein>